<organism>
    <name type="scientific">Bacillus velezensis (strain DSM 23117 / BGSC 10A6 / LMG 26770 / FZB42)</name>
    <name type="common">Bacillus amyloliquefaciens subsp. plantarum</name>
    <dbReference type="NCBI Taxonomy" id="326423"/>
    <lineage>
        <taxon>Bacteria</taxon>
        <taxon>Bacillati</taxon>
        <taxon>Bacillota</taxon>
        <taxon>Bacilli</taxon>
        <taxon>Bacillales</taxon>
        <taxon>Bacillaceae</taxon>
        <taxon>Bacillus</taxon>
        <taxon>Bacillus amyloliquefaciens group</taxon>
    </lineage>
</organism>
<reference key="1">
    <citation type="journal article" date="2007" name="Nat. Biotechnol.">
        <title>Comparative analysis of the complete genome sequence of the plant growth-promoting bacterium Bacillus amyloliquefaciens FZB42.</title>
        <authorList>
            <person name="Chen X.H."/>
            <person name="Koumoutsi A."/>
            <person name="Scholz R."/>
            <person name="Eisenreich A."/>
            <person name="Schneider K."/>
            <person name="Heinemeyer I."/>
            <person name="Morgenstern B."/>
            <person name="Voss B."/>
            <person name="Hess W.R."/>
            <person name="Reva O."/>
            <person name="Junge H."/>
            <person name="Voigt B."/>
            <person name="Jungblut P.R."/>
            <person name="Vater J."/>
            <person name="Suessmuth R."/>
            <person name="Liesegang H."/>
            <person name="Strittmatter A."/>
            <person name="Gottschalk G."/>
            <person name="Borriss R."/>
        </authorList>
    </citation>
    <scope>NUCLEOTIDE SEQUENCE [LARGE SCALE GENOMIC DNA]</scope>
    <source>
        <strain>DSM 23117 / BGSC 10A6 / LMG 26770 / FZB42</strain>
    </source>
</reference>
<protein>
    <recommendedName>
        <fullName evidence="1">DNA-directed RNA polymerase subunit beta</fullName>
        <shortName evidence="1">RNAP subunit beta</shortName>
        <ecNumber evidence="1">2.7.7.6</ecNumber>
    </recommendedName>
    <alternativeName>
        <fullName evidence="1">RNA polymerase subunit beta</fullName>
    </alternativeName>
    <alternativeName>
        <fullName evidence="1">Transcriptase subunit beta</fullName>
    </alternativeName>
</protein>
<comment type="function">
    <text evidence="1">DNA-dependent RNA polymerase catalyzes the transcription of DNA into RNA using the four ribonucleoside triphosphates as substrates.</text>
</comment>
<comment type="catalytic activity">
    <reaction evidence="1">
        <text>RNA(n) + a ribonucleoside 5'-triphosphate = RNA(n+1) + diphosphate</text>
        <dbReference type="Rhea" id="RHEA:21248"/>
        <dbReference type="Rhea" id="RHEA-COMP:14527"/>
        <dbReference type="Rhea" id="RHEA-COMP:17342"/>
        <dbReference type="ChEBI" id="CHEBI:33019"/>
        <dbReference type="ChEBI" id="CHEBI:61557"/>
        <dbReference type="ChEBI" id="CHEBI:140395"/>
        <dbReference type="EC" id="2.7.7.6"/>
    </reaction>
</comment>
<comment type="subunit">
    <text evidence="1">The RNAP catalytic core consists of 2 alpha, 1 beta, 1 beta' and 1 omega subunit. When a sigma factor is associated with the core the holoenzyme is formed, which can initiate transcription.</text>
</comment>
<comment type="similarity">
    <text evidence="1">Belongs to the RNA polymerase beta chain family.</text>
</comment>
<keyword id="KW-0240">DNA-directed RNA polymerase</keyword>
<keyword id="KW-0548">Nucleotidyltransferase</keyword>
<keyword id="KW-0804">Transcription</keyword>
<keyword id="KW-0808">Transferase</keyword>
<proteinExistence type="inferred from homology"/>
<sequence>MNQLTGQLVQYGRHRQRRSYARISEVLELPNLIEIQTSSYQWFLDEGLREMFQDISPIEDFTGNLSLEFIDYSLGDPKYPVEESKERDVTYSAPLRVKVRLINKETGEVKDQDVFMGDFPIMTDTGTFIINGAERVIVSQLVRSPSVYFSGKVDKNGKKGFTATVIPNRGAWLEYETDAKDVVYVRIDRTRKLPVTVLLRALGFGSDQEILDLIGENEYLRNTLDKDNTENSDKALLEIYERLRPGEPPTVENAKSLLDSRFFDPKRYDLANVGRYKINKKLHIKNRLFNQRLAETLVDPETGEILAEKGQILDRRTLDKVLPYLENGIGFRKLYPNGGVVEDEVMLQSIKIYAPTDAEGEQTINVIGNAYIEEAIKNITPADIISSISYFFNLLHGVGDTDDIDHLGNRRLRSVGELLQNQFRIGLSRMERVVRERMSIQDTNTITPQQLINIRPVIASIKEFFGSSQLSQFMDQTNPLAELTHKRRLSALGPGGLTRERAGMEVRDVHYSHYGRMCPIETPEGPNIGLINSLSSFAKVNRFGFIETPYRRVDPETGKVTPRIDYLTADEEDNYVVAQANAKLSDDGSFLDDSIVARFRGENTVVARNRVDYMDVSPKQVVSAATACIPFLENDDSNRALMGANMQRQAVPLMQPEAPIVGTGMEYVSGKDSGAAVICKHPGIVERVEAKNVWVRRYEEIDGQKVKGNLDKYSLLKFVRSNQGTCYNQRPIVSVGDEVVKGEILADGPSMELGELALGRNVMVGFMTWDGYNYEDAIIMSERLVKDDVYTSIHIEEYESEARDTKLGPEEITRDIPNVGEDALRNLDDRGIIRIGAEVNDGDLLVGKVTPKGVTELTAEERLLHAIFGEKAREVRDTSLRVPHGGGGIIHDVKVFNREDGDELPPGVNQLVRVYIVQKRKISEGDKMAGRHGNKGVISKILPEEDMPYLPDGTPIDIMLNPLGVPSRMNIGQVLELHMGMAARYLGIHIASPVFDGAREEDVWETLEEAGMSRDAKTVLYDGRTGEPFDNRVSVGIMYMIKLAHMVDDKLHARSTGPYSLVTQQPLGGKAQFGGQRFGEMEVWALEAYGAAYTLQEILTVKSDDVVGRVKTYEAIVKGDNVPEPGVPESFKVLIKELQSLGMDVKILSGDEEEIEMRDLEDEEDAKQADGLALSGDEAPEETASPDVERDAVTKE</sequence>
<evidence type="ECO:0000255" key="1">
    <source>
        <dbReference type="HAMAP-Rule" id="MF_01321"/>
    </source>
</evidence>
<evidence type="ECO:0000256" key="2">
    <source>
        <dbReference type="SAM" id="MobiDB-lite"/>
    </source>
</evidence>
<gene>
    <name evidence="1" type="primary">rpoB</name>
    <name type="ordered locus">RBAM_001320</name>
</gene>
<accession>A7Z0M9</accession>
<dbReference type="EC" id="2.7.7.6" evidence="1"/>
<dbReference type="EMBL" id="CP000560">
    <property type="protein sequence ID" value="ABS72555.1"/>
    <property type="molecule type" value="Genomic_DNA"/>
</dbReference>
<dbReference type="SMR" id="A7Z0M9"/>
<dbReference type="KEGG" id="bay:RBAM_001320"/>
<dbReference type="HOGENOM" id="CLU_000524_4_1_9"/>
<dbReference type="Proteomes" id="UP000001120">
    <property type="component" value="Chromosome"/>
</dbReference>
<dbReference type="GO" id="GO:0000428">
    <property type="term" value="C:DNA-directed RNA polymerase complex"/>
    <property type="evidence" value="ECO:0007669"/>
    <property type="project" value="UniProtKB-KW"/>
</dbReference>
<dbReference type="GO" id="GO:0003677">
    <property type="term" value="F:DNA binding"/>
    <property type="evidence" value="ECO:0007669"/>
    <property type="project" value="UniProtKB-UniRule"/>
</dbReference>
<dbReference type="GO" id="GO:0003899">
    <property type="term" value="F:DNA-directed RNA polymerase activity"/>
    <property type="evidence" value="ECO:0007669"/>
    <property type="project" value="UniProtKB-UniRule"/>
</dbReference>
<dbReference type="GO" id="GO:0032549">
    <property type="term" value="F:ribonucleoside binding"/>
    <property type="evidence" value="ECO:0007669"/>
    <property type="project" value="InterPro"/>
</dbReference>
<dbReference type="GO" id="GO:0006351">
    <property type="term" value="P:DNA-templated transcription"/>
    <property type="evidence" value="ECO:0007669"/>
    <property type="project" value="UniProtKB-UniRule"/>
</dbReference>
<dbReference type="CDD" id="cd00653">
    <property type="entry name" value="RNA_pol_B_RPB2"/>
    <property type="match status" value="1"/>
</dbReference>
<dbReference type="FunFam" id="3.90.1800.10:FF:000001">
    <property type="entry name" value="DNA-directed RNA polymerase subunit beta"/>
    <property type="match status" value="1"/>
</dbReference>
<dbReference type="Gene3D" id="2.40.50.100">
    <property type="match status" value="1"/>
</dbReference>
<dbReference type="Gene3D" id="2.40.50.150">
    <property type="match status" value="1"/>
</dbReference>
<dbReference type="Gene3D" id="3.90.1100.10">
    <property type="match status" value="2"/>
</dbReference>
<dbReference type="Gene3D" id="2.30.150.10">
    <property type="entry name" value="DNA-directed RNA polymerase, beta subunit, external 1 domain"/>
    <property type="match status" value="1"/>
</dbReference>
<dbReference type="Gene3D" id="2.40.270.10">
    <property type="entry name" value="DNA-directed RNA polymerase, subunit 2, domain 6"/>
    <property type="match status" value="1"/>
</dbReference>
<dbReference type="Gene3D" id="3.90.1800.10">
    <property type="entry name" value="RNA polymerase alpha subunit dimerisation domain"/>
    <property type="match status" value="1"/>
</dbReference>
<dbReference type="Gene3D" id="3.90.1110.10">
    <property type="entry name" value="RNA polymerase Rpb2, domain 2"/>
    <property type="match status" value="1"/>
</dbReference>
<dbReference type="HAMAP" id="MF_01321">
    <property type="entry name" value="RNApol_bact_RpoB"/>
    <property type="match status" value="1"/>
</dbReference>
<dbReference type="InterPro" id="IPR042107">
    <property type="entry name" value="DNA-dir_RNA_pol_bsu_ext_1_sf"/>
</dbReference>
<dbReference type="InterPro" id="IPR019462">
    <property type="entry name" value="DNA-dir_RNA_pol_bsu_external_1"/>
</dbReference>
<dbReference type="InterPro" id="IPR015712">
    <property type="entry name" value="DNA-dir_RNA_pol_su2"/>
</dbReference>
<dbReference type="InterPro" id="IPR007120">
    <property type="entry name" value="DNA-dir_RNAP_su2_dom"/>
</dbReference>
<dbReference type="InterPro" id="IPR037033">
    <property type="entry name" value="DNA-dir_RNAP_su2_hyb_sf"/>
</dbReference>
<dbReference type="InterPro" id="IPR010243">
    <property type="entry name" value="RNA_pol_bsu_bac"/>
</dbReference>
<dbReference type="InterPro" id="IPR007121">
    <property type="entry name" value="RNA_pol_bsu_CS"/>
</dbReference>
<dbReference type="InterPro" id="IPR007644">
    <property type="entry name" value="RNA_pol_bsu_protrusion"/>
</dbReference>
<dbReference type="InterPro" id="IPR007642">
    <property type="entry name" value="RNA_pol_Rpb2_2"/>
</dbReference>
<dbReference type="InterPro" id="IPR037034">
    <property type="entry name" value="RNA_pol_Rpb2_2_sf"/>
</dbReference>
<dbReference type="InterPro" id="IPR007645">
    <property type="entry name" value="RNA_pol_Rpb2_3"/>
</dbReference>
<dbReference type="InterPro" id="IPR007641">
    <property type="entry name" value="RNA_pol_Rpb2_7"/>
</dbReference>
<dbReference type="InterPro" id="IPR014724">
    <property type="entry name" value="RNA_pol_RPB2_OB-fold"/>
</dbReference>
<dbReference type="NCBIfam" id="NF001616">
    <property type="entry name" value="PRK00405.1"/>
    <property type="match status" value="1"/>
</dbReference>
<dbReference type="NCBIfam" id="TIGR02013">
    <property type="entry name" value="rpoB"/>
    <property type="match status" value="1"/>
</dbReference>
<dbReference type="PANTHER" id="PTHR20856">
    <property type="entry name" value="DNA-DIRECTED RNA POLYMERASE I SUBUNIT 2"/>
    <property type="match status" value="1"/>
</dbReference>
<dbReference type="Pfam" id="PF04563">
    <property type="entry name" value="RNA_pol_Rpb2_1"/>
    <property type="match status" value="1"/>
</dbReference>
<dbReference type="Pfam" id="PF04561">
    <property type="entry name" value="RNA_pol_Rpb2_2"/>
    <property type="match status" value="2"/>
</dbReference>
<dbReference type="Pfam" id="PF04565">
    <property type="entry name" value="RNA_pol_Rpb2_3"/>
    <property type="match status" value="1"/>
</dbReference>
<dbReference type="Pfam" id="PF10385">
    <property type="entry name" value="RNA_pol_Rpb2_45"/>
    <property type="match status" value="1"/>
</dbReference>
<dbReference type="Pfam" id="PF00562">
    <property type="entry name" value="RNA_pol_Rpb2_6"/>
    <property type="match status" value="1"/>
</dbReference>
<dbReference type="Pfam" id="PF04560">
    <property type="entry name" value="RNA_pol_Rpb2_7"/>
    <property type="match status" value="1"/>
</dbReference>
<dbReference type="SUPFAM" id="SSF64484">
    <property type="entry name" value="beta and beta-prime subunits of DNA dependent RNA-polymerase"/>
    <property type="match status" value="1"/>
</dbReference>
<dbReference type="PROSITE" id="PS01166">
    <property type="entry name" value="RNA_POL_BETA"/>
    <property type="match status" value="1"/>
</dbReference>
<name>RPOB_BACVZ</name>
<feature type="chain" id="PRO_0000329165" description="DNA-directed RNA polymerase subunit beta">
    <location>
        <begin position="1"/>
        <end position="1196"/>
    </location>
</feature>
<feature type="region of interest" description="Disordered" evidence="2">
    <location>
        <begin position="1152"/>
        <end position="1196"/>
    </location>
</feature>
<feature type="compositionally biased region" description="Acidic residues" evidence="2">
    <location>
        <begin position="1152"/>
        <end position="1165"/>
    </location>
</feature>
<feature type="compositionally biased region" description="Basic and acidic residues" evidence="2">
    <location>
        <begin position="1187"/>
        <end position="1196"/>
    </location>
</feature>